<organism>
    <name type="scientific">Chlamydia pneumoniae</name>
    <name type="common">Chlamydophila pneumoniae</name>
    <dbReference type="NCBI Taxonomy" id="83558"/>
    <lineage>
        <taxon>Bacteria</taxon>
        <taxon>Pseudomonadati</taxon>
        <taxon>Chlamydiota</taxon>
        <taxon>Chlamydiia</taxon>
        <taxon>Chlamydiales</taxon>
        <taxon>Chlamydiaceae</taxon>
        <taxon>Chlamydia/Chlamydophila group</taxon>
        <taxon>Chlamydia</taxon>
    </lineage>
</organism>
<dbReference type="EC" id="3.1.21.2" evidence="1"/>
<dbReference type="EMBL" id="AE001363">
    <property type="protein sequence ID" value="AAD18871.1"/>
    <property type="molecule type" value="Genomic_DNA"/>
</dbReference>
<dbReference type="EMBL" id="AE002161">
    <property type="protein sequence ID" value="AAF37910.1"/>
    <property type="molecule type" value="Genomic_DNA"/>
</dbReference>
<dbReference type="EMBL" id="BA000008">
    <property type="protein sequence ID" value="BAA98939.1"/>
    <property type="molecule type" value="Genomic_DNA"/>
</dbReference>
<dbReference type="EMBL" id="AE009440">
    <property type="protein sequence ID" value="AAP98689.1"/>
    <property type="molecule type" value="Genomic_DNA"/>
</dbReference>
<dbReference type="PIR" id="A86582">
    <property type="entry name" value="A86582"/>
</dbReference>
<dbReference type="PIR" id="H72042">
    <property type="entry name" value="H72042"/>
</dbReference>
<dbReference type="RefSeq" id="NP_224928.1">
    <property type="nucleotide sequence ID" value="NC_000922.1"/>
</dbReference>
<dbReference type="RefSeq" id="WP_010883370.1">
    <property type="nucleotide sequence ID" value="NZ_LN847257.1"/>
</dbReference>
<dbReference type="SMR" id="Q9Z7H3"/>
<dbReference type="STRING" id="406984.CPK_ORF00138"/>
<dbReference type="GeneID" id="45050787"/>
<dbReference type="KEGG" id="cpa:CP_0014"/>
<dbReference type="KEGG" id="cpj:nfo"/>
<dbReference type="KEGG" id="cpn:CPn_0732"/>
<dbReference type="KEGG" id="cpt:CpB0760"/>
<dbReference type="PATRIC" id="fig|115713.3.peg.808"/>
<dbReference type="eggNOG" id="COG0648">
    <property type="taxonomic scope" value="Bacteria"/>
</dbReference>
<dbReference type="HOGENOM" id="CLU_025885_0_1_0"/>
<dbReference type="OrthoDB" id="9805666at2"/>
<dbReference type="Proteomes" id="UP000000583">
    <property type="component" value="Chromosome"/>
</dbReference>
<dbReference type="Proteomes" id="UP000000801">
    <property type="component" value="Chromosome"/>
</dbReference>
<dbReference type="GO" id="GO:0008833">
    <property type="term" value="F:deoxyribonuclease IV (phage-T4-induced) activity"/>
    <property type="evidence" value="ECO:0007669"/>
    <property type="project" value="UniProtKB-UniRule"/>
</dbReference>
<dbReference type="GO" id="GO:0003677">
    <property type="term" value="F:DNA binding"/>
    <property type="evidence" value="ECO:0007669"/>
    <property type="project" value="InterPro"/>
</dbReference>
<dbReference type="GO" id="GO:0003906">
    <property type="term" value="F:DNA-(apurinic or apyrimidinic site) endonuclease activity"/>
    <property type="evidence" value="ECO:0007669"/>
    <property type="project" value="TreeGrafter"/>
</dbReference>
<dbReference type="GO" id="GO:0008081">
    <property type="term" value="F:phosphoric diester hydrolase activity"/>
    <property type="evidence" value="ECO:0007669"/>
    <property type="project" value="TreeGrafter"/>
</dbReference>
<dbReference type="GO" id="GO:0008270">
    <property type="term" value="F:zinc ion binding"/>
    <property type="evidence" value="ECO:0007669"/>
    <property type="project" value="UniProtKB-UniRule"/>
</dbReference>
<dbReference type="GO" id="GO:0006284">
    <property type="term" value="P:base-excision repair"/>
    <property type="evidence" value="ECO:0007669"/>
    <property type="project" value="TreeGrafter"/>
</dbReference>
<dbReference type="CDD" id="cd00019">
    <property type="entry name" value="AP2Ec"/>
    <property type="match status" value="1"/>
</dbReference>
<dbReference type="FunFam" id="3.20.20.150:FF:000001">
    <property type="entry name" value="Probable endonuclease 4"/>
    <property type="match status" value="1"/>
</dbReference>
<dbReference type="Gene3D" id="3.20.20.150">
    <property type="entry name" value="Divalent-metal-dependent TIM barrel enzymes"/>
    <property type="match status" value="1"/>
</dbReference>
<dbReference type="HAMAP" id="MF_00152">
    <property type="entry name" value="Nfo"/>
    <property type="match status" value="1"/>
</dbReference>
<dbReference type="InterPro" id="IPR001719">
    <property type="entry name" value="AP_endonuc_2"/>
</dbReference>
<dbReference type="InterPro" id="IPR018246">
    <property type="entry name" value="AP_endonuc_F2_Zn_BS"/>
</dbReference>
<dbReference type="InterPro" id="IPR036237">
    <property type="entry name" value="Xyl_isomerase-like_sf"/>
</dbReference>
<dbReference type="InterPro" id="IPR013022">
    <property type="entry name" value="Xyl_isomerase-like_TIM-brl"/>
</dbReference>
<dbReference type="NCBIfam" id="TIGR00587">
    <property type="entry name" value="nfo"/>
    <property type="match status" value="1"/>
</dbReference>
<dbReference type="NCBIfam" id="NF002197">
    <property type="entry name" value="PRK01060.1-2"/>
    <property type="match status" value="1"/>
</dbReference>
<dbReference type="PANTHER" id="PTHR21445:SF0">
    <property type="entry name" value="APURINIC-APYRIMIDINIC ENDONUCLEASE"/>
    <property type="match status" value="1"/>
</dbReference>
<dbReference type="PANTHER" id="PTHR21445">
    <property type="entry name" value="ENDONUCLEASE IV ENDODEOXYRIBONUCLEASE IV"/>
    <property type="match status" value="1"/>
</dbReference>
<dbReference type="Pfam" id="PF01261">
    <property type="entry name" value="AP_endonuc_2"/>
    <property type="match status" value="1"/>
</dbReference>
<dbReference type="SMART" id="SM00518">
    <property type="entry name" value="AP2Ec"/>
    <property type="match status" value="1"/>
</dbReference>
<dbReference type="SUPFAM" id="SSF51658">
    <property type="entry name" value="Xylose isomerase-like"/>
    <property type="match status" value="1"/>
</dbReference>
<dbReference type="PROSITE" id="PS00729">
    <property type="entry name" value="AP_NUCLEASE_F2_1"/>
    <property type="match status" value="1"/>
</dbReference>
<dbReference type="PROSITE" id="PS00730">
    <property type="entry name" value="AP_NUCLEASE_F2_2"/>
    <property type="match status" value="1"/>
</dbReference>
<dbReference type="PROSITE" id="PS00731">
    <property type="entry name" value="AP_NUCLEASE_F2_3"/>
    <property type="match status" value="1"/>
</dbReference>
<dbReference type="PROSITE" id="PS51432">
    <property type="entry name" value="AP_NUCLEASE_F2_4"/>
    <property type="match status" value="1"/>
</dbReference>
<name>END4_CHLPN</name>
<feature type="chain" id="PRO_0000190833" description="Probable endonuclease 4">
    <location>
        <begin position="1"/>
        <end position="293"/>
    </location>
</feature>
<feature type="binding site" evidence="1">
    <location>
        <position position="75"/>
    </location>
    <ligand>
        <name>Zn(2+)</name>
        <dbReference type="ChEBI" id="CHEBI:29105"/>
        <label>1</label>
    </ligand>
</feature>
<feature type="binding site" evidence="1">
    <location>
        <position position="115"/>
    </location>
    <ligand>
        <name>Zn(2+)</name>
        <dbReference type="ChEBI" id="CHEBI:29105"/>
        <label>1</label>
    </ligand>
</feature>
<feature type="binding site" evidence="1">
    <location>
        <position position="153"/>
    </location>
    <ligand>
        <name>Zn(2+)</name>
        <dbReference type="ChEBI" id="CHEBI:29105"/>
        <label>1</label>
    </ligand>
</feature>
<feature type="binding site" evidence="1">
    <location>
        <position position="153"/>
    </location>
    <ligand>
        <name>Zn(2+)</name>
        <dbReference type="ChEBI" id="CHEBI:29105"/>
        <label>2</label>
    </ligand>
</feature>
<feature type="binding site" evidence="1">
    <location>
        <position position="187"/>
    </location>
    <ligand>
        <name>Zn(2+)</name>
        <dbReference type="ChEBI" id="CHEBI:29105"/>
        <label>2</label>
    </ligand>
</feature>
<feature type="binding site" evidence="1">
    <location>
        <position position="190"/>
    </location>
    <ligand>
        <name>Zn(2+)</name>
        <dbReference type="ChEBI" id="CHEBI:29105"/>
        <label>3</label>
    </ligand>
</feature>
<feature type="binding site" evidence="1">
    <location>
        <position position="224"/>
    </location>
    <ligand>
        <name>Zn(2+)</name>
        <dbReference type="ChEBI" id="CHEBI:29105"/>
        <label>2</label>
    </ligand>
</feature>
<feature type="binding site" evidence="1">
    <location>
        <position position="237"/>
    </location>
    <ligand>
        <name>Zn(2+)</name>
        <dbReference type="ChEBI" id="CHEBI:29105"/>
        <label>3</label>
    </ligand>
</feature>
<feature type="binding site" evidence="1">
    <location>
        <position position="239"/>
    </location>
    <ligand>
        <name>Zn(2+)</name>
        <dbReference type="ChEBI" id="CHEBI:29105"/>
        <label>3</label>
    </ligand>
</feature>
<feature type="binding site" evidence="1">
    <location>
        <position position="269"/>
    </location>
    <ligand>
        <name>Zn(2+)</name>
        <dbReference type="ChEBI" id="CHEBI:29105"/>
        <label>2</label>
    </ligand>
</feature>
<protein>
    <recommendedName>
        <fullName evidence="1">Probable endonuclease 4</fullName>
        <ecNumber evidence="1">3.1.21.2</ecNumber>
    </recommendedName>
    <alternativeName>
        <fullName evidence="1">Endodeoxyribonuclease IV</fullName>
    </alternativeName>
    <alternativeName>
        <fullName evidence="1">Endonuclease IV</fullName>
    </alternativeName>
</protein>
<keyword id="KW-0227">DNA damage</keyword>
<keyword id="KW-0234">DNA repair</keyword>
<keyword id="KW-0255">Endonuclease</keyword>
<keyword id="KW-0378">Hydrolase</keyword>
<keyword id="KW-0479">Metal-binding</keyword>
<keyword id="KW-0540">Nuclease</keyword>
<keyword id="KW-0862">Zinc</keyword>
<gene>
    <name evidence="1" type="primary">nfo</name>
    <name type="ordered locus">CPn_0732</name>
    <name type="ordered locus">CP_0014</name>
    <name type="ordered locus">CpB0760</name>
</gene>
<reference key="1">
    <citation type="journal article" date="1999" name="Nat. Genet.">
        <title>Comparative genomes of Chlamydia pneumoniae and C. trachomatis.</title>
        <authorList>
            <person name="Kalman S."/>
            <person name="Mitchell W.P."/>
            <person name="Marathe R."/>
            <person name="Lammel C.J."/>
            <person name="Fan J."/>
            <person name="Hyman R.W."/>
            <person name="Olinger L."/>
            <person name="Grimwood J."/>
            <person name="Davis R.W."/>
            <person name="Stephens R.S."/>
        </authorList>
    </citation>
    <scope>NUCLEOTIDE SEQUENCE [LARGE SCALE GENOMIC DNA]</scope>
    <source>
        <strain>CWL029</strain>
    </source>
</reference>
<reference key="2">
    <citation type="journal article" date="2000" name="Nucleic Acids Res.">
        <title>Genome sequences of Chlamydia trachomatis MoPn and Chlamydia pneumoniae AR39.</title>
        <authorList>
            <person name="Read T.D."/>
            <person name="Brunham R.C."/>
            <person name="Shen C."/>
            <person name="Gill S.R."/>
            <person name="Heidelberg J.F."/>
            <person name="White O."/>
            <person name="Hickey E.K."/>
            <person name="Peterson J.D."/>
            <person name="Utterback T.R."/>
            <person name="Berry K.J."/>
            <person name="Bass S."/>
            <person name="Linher K.D."/>
            <person name="Weidman J.F."/>
            <person name="Khouri H.M."/>
            <person name="Craven B."/>
            <person name="Bowman C."/>
            <person name="Dodson R.J."/>
            <person name="Gwinn M.L."/>
            <person name="Nelson W.C."/>
            <person name="DeBoy R.T."/>
            <person name="Kolonay J.F."/>
            <person name="McClarty G."/>
            <person name="Salzberg S.L."/>
            <person name="Eisen J.A."/>
            <person name="Fraser C.M."/>
        </authorList>
    </citation>
    <scope>NUCLEOTIDE SEQUENCE [LARGE SCALE GENOMIC DNA]</scope>
    <source>
        <strain>AR39</strain>
    </source>
</reference>
<reference key="3">
    <citation type="journal article" date="2000" name="Nucleic Acids Res.">
        <title>Comparison of whole genome sequences of Chlamydia pneumoniae J138 from Japan and CWL029 from USA.</title>
        <authorList>
            <person name="Shirai M."/>
            <person name="Hirakawa H."/>
            <person name="Kimoto M."/>
            <person name="Tabuchi M."/>
            <person name="Kishi F."/>
            <person name="Ouchi K."/>
            <person name="Shiba T."/>
            <person name="Ishii K."/>
            <person name="Hattori M."/>
            <person name="Kuhara S."/>
            <person name="Nakazawa T."/>
        </authorList>
    </citation>
    <scope>NUCLEOTIDE SEQUENCE [LARGE SCALE GENOMIC DNA]</scope>
    <source>
        <strain>J138</strain>
    </source>
</reference>
<reference key="4">
    <citation type="submission" date="2002-05" db="EMBL/GenBank/DDBJ databases">
        <title>The genome sequence of Chlamydia pneumoniae TW183 and comparison with other Chlamydia strains based on whole genome sequence analysis.</title>
        <authorList>
            <person name="Geng M.M."/>
            <person name="Schuhmacher A."/>
            <person name="Muehldorfer I."/>
            <person name="Bensch K.W."/>
            <person name="Schaefer K.P."/>
            <person name="Schneider S."/>
            <person name="Pohl T."/>
            <person name="Essig A."/>
            <person name="Marre R."/>
            <person name="Melchers K."/>
        </authorList>
    </citation>
    <scope>NUCLEOTIDE SEQUENCE [LARGE SCALE GENOMIC DNA]</scope>
    <source>
        <strain>TW-183</strain>
    </source>
</reference>
<evidence type="ECO:0000255" key="1">
    <source>
        <dbReference type="HAMAP-Rule" id="MF_00152"/>
    </source>
</evidence>
<comment type="function">
    <text evidence="1">Endonuclease IV plays a role in DNA repair. It cleaves phosphodiester bonds at apurinic or apyrimidinic (AP) sites, generating a 3'-hydroxyl group and a 5'-terminal sugar phosphate.</text>
</comment>
<comment type="catalytic activity">
    <reaction evidence="1">
        <text>Endonucleolytic cleavage to 5'-phosphooligonucleotide end-products.</text>
        <dbReference type="EC" id="3.1.21.2"/>
    </reaction>
</comment>
<comment type="cofactor">
    <cofactor evidence="1">
        <name>Zn(2+)</name>
        <dbReference type="ChEBI" id="CHEBI:29105"/>
    </cofactor>
    <text evidence="1">Binds 3 Zn(2+) ions.</text>
</comment>
<comment type="similarity">
    <text evidence="1">Belongs to the AP endonuclease 2 family.</text>
</comment>
<sequence>MKVLPPPSIPLLGAHTSTAGGLKNAIYEGRDIGASTVQIFTANQRQWQRRALKEEVIEDFKAALKETDLSYIMSHAGYLINPGAPDPVILEKSRIGIYQEILDCITLGISFVNFHPGAALKSSKEDCMNKIVSSFSQSAPLFDSSPPLVVLLETTAGQGTLIGSNFEELGYLVQNLKNQIPIGVCVDTCHIFAAGYDITSPQGWEDVLNEFDEYVGLSYLRAFHLNDSMFPLGANKDRHAPLGEGYIGKESFKFLMTDERTRKIPKYLETPGGPENWQKEIGELLKFSKNRDS</sequence>
<proteinExistence type="inferred from homology"/>
<accession>Q9Z7H3</accession>
<accession>Q9JQ87</accession>